<organism>
    <name type="scientific">Phytoplasma mali (strain AT)</name>
    <dbReference type="NCBI Taxonomy" id="482235"/>
    <lineage>
        <taxon>Bacteria</taxon>
        <taxon>Bacillati</taxon>
        <taxon>Mycoplasmatota</taxon>
        <taxon>Mollicutes</taxon>
        <taxon>Acholeplasmatales</taxon>
        <taxon>Acholeplasmataceae</taxon>
        <taxon>Candidatus Phytoplasma</taxon>
        <taxon>16SrX (Apple proliferation group)</taxon>
    </lineage>
</organism>
<comment type="PTM">
    <text evidence="1">The N-terminus is cleaved by ribosomal processing cysteine protease Prp.</text>
</comment>
<comment type="similarity">
    <text evidence="2">Belongs to the bacterial ribosomal protein bL27 family.</text>
</comment>
<keyword id="KW-1185">Reference proteome</keyword>
<keyword id="KW-0687">Ribonucleoprotein</keyword>
<keyword id="KW-0689">Ribosomal protein</keyword>
<accession>B3QZT2</accession>
<evidence type="ECO:0000250" key="1">
    <source>
        <dbReference type="UniProtKB" id="Q2FXT0"/>
    </source>
</evidence>
<evidence type="ECO:0000255" key="2">
    <source>
        <dbReference type="HAMAP-Rule" id="MF_00539"/>
    </source>
</evidence>
<evidence type="ECO:0000305" key="3"/>
<name>RL27_PHYMT</name>
<gene>
    <name evidence="2" type="primary">rpmA</name>
    <name type="ordered locus">ATP_00282</name>
</gene>
<reference key="1">
    <citation type="journal article" date="2008" name="BMC Genomics">
        <title>The linear chromosome of the plant-pathogenic mycoplasma 'Candidatus Phytoplasma mali'.</title>
        <authorList>
            <person name="Kube M."/>
            <person name="Schneider B."/>
            <person name="Kuhl H."/>
            <person name="Dandekar T."/>
            <person name="Heitmann K."/>
            <person name="Migdoll A.M."/>
            <person name="Reinhardt R."/>
            <person name="Seemueller E."/>
        </authorList>
    </citation>
    <scope>NUCLEOTIDE SEQUENCE [LARGE SCALE GENOMIC DNA]</scope>
    <source>
        <strain>AT</strain>
    </source>
</reference>
<dbReference type="EMBL" id="CU469464">
    <property type="protein sequence ID" value="CAP18469.1"/>
    <property type="molecule type" value="Genomic_DNA"/>
</dbReference>
<dbReference type="SMR" id="B3QZT2"/>
<dbReference type="STRING" id="37692.ATP_00282"/>
<dbReference type="KEGG" id="pml:ATP_00282"/>
<dbReference type="eggNOG" id="COG0211">
    <property type="taxonomic scope" value="Bacteria"/>
</dbReference>
<dbReference type="HOGENOM" id="CLU_095424_4_0_14"/>
<dbReference type="Proteomes" id="UP000002020">
    <property type="component" value="Chromosome"/>
</dbReference>
<dbReference type="GO" id="GO:0022625">
    <property type="term" value="C:cytosolic large ribosomal subunit"/>
    <property type="evidence" value="ECO:0007669"/>
    <property type="project" value="TreeGrafter"/>
</dbReference>
<dbReference type="GO" id="GO:0003735">
    <property type="term" value="F:structural constituent of ribosome"/>
    <property type="evidence" value="ECO:0007669"/>
    <property type="project" value="InterPro"/>
</dbReference>
<dbReference type="GO" id="GO:0006412">
    <property type="term" value="P:translation"/>
    <property type="evidence" value="ECO:0007669"/>
    <property type="project" value="UniProtKB-UniRule"/>
</dbReference>
<dbReference type="FunFam" id="2.40.50.100:FF:000004">
    <property type="entry name" value="50S ribosomal protein L27"/>
    <property type="match status" value="1"/>
</dbReference>
<dbReference type="Gene3D" id="2.40.50.100">
    <property type="match status" value="1"/>
</dbReference>
<dbReference type="HAMAP" id="MF_00539">
    <property type="entry name" value="Ribosomal_bL27"/>
    <property type="match status" value="1"/>
</dbReference>
<dbReference type="InterPro" id="IPR001684">
    <property type="entry name" value="Ribosomal_bL27"/>
</dbReference>
<dbReference type="InterPro" id="IPR018261">
    <property type="entry name" value="Ribosomal_bL27_CS"/>
</dbReference>
<dbReference type="NCBIfam" id="TIGR00062">
    <property type="entry name" value="L27"/>
    <property type="match status" value="1"/>
</dbReference>
<dbReference type="PANTHER" id="PTHR15893:SF0">
    <property type="entry name" value="LARGE RIBOSOMAL SUBUNIT PROTEIN BL27M"/>
    <property type="match status" value="1"/>
</dbReference>
<dbReference type="PANTHER" id="PTHR15893">
    <property type="entry name" value="RIBOSOMAL PROTEIN L27"/>
    <property type="match status" value="1"/>
</dbReference>
<dbReference type="Pfam" id="PF01016">
    <property type="entry name" value="Ribosomal_L27"/>
    <property type="match status" value="1"/>
</dbReference>
<dbReference type="PRINTS" id="PR00063">
    <property type="entry name" value="RIBOSOMALL27"/>
</dbReference>
<dbReference type="SUPFAM" id="SSF110324">
    <property type="entry name" value="Ribosomal L27 protein-like"/>
    <property type="match status" value="1"/>
</dbReference>
<dbReference type="PROSITE" id="PS00831">
    <property type="entry name" value="RIBOSOMAL_L27"/>
    <property type="match status" value="1"/>
</dbReference>
<feature type="propeptide" id="PRO_0000459926" evidence="1">
    <location>
        <begin position="1"/>
        <end position="10"/>
    </location>
</feature>
<feature type="chain" id="PRO_1000195881" description="Large ribosomal subunit protein bL27">
    <location>
        <begin position="11"/>
        <end position="96"/>
    </location>
</feature>
<protein>
    <recommendedName>
        <fullName evidence="2">Large ribosomal subunit protein bL27</fullName>
    </recommendedName>
    <alternativeName>
        <fullName evidence="3">50S ribosomal protein L27</fullName>
    </alternativeName>
</protein>
<sequence>MLLKLNIQLFASKKGVGSTRNGRDSHSKRLGAKISDGQYATAGSIIYRQRGTKIHPGYNVGVGSDYTLFTKINGFIKYTNKKNKKQVSVYENIKKI</sequence>
<proteinExistence type="inferred from homology"/>